<gene>
    <name type="primary">H2-Eb1</name>
</gene>
<protein>
    <recommendedName>
        <fullName>H-2 class II histocompatibility antigen, I-A beta chain</fullName>
    </recommendedName>
</protein>
<accession>P18468</accession>
<comment type="subcellular location">
    <subcellularLocation>
        <location evidence="6">Membrane</location>
        <topology evidence="6">Single-pass type I membrane protein</topology>
    </subcellularLocation>
</comment>
<comment type="PTM">
    <text evidence="4 5">Ubiquitinated in immature dendritic cells leading to down-regulation of MHC class II.</text>
</comment>
<comment type="similarity">
    <text evidence="6">Belongs to the MHC class II family.</text>
</comment>
<reference key="1">
    <citation type="journal article" date="1991" name="Immunogenetics">
        <title>Nonobese diabetic and nonobese nondiabetic mice have unique MHC class II haplotypes.</title>
        <authorList>
            <person name="Acha-Orbea H."/>
            <person name="Scarpellino L."/>
        </authorList>
    </citation>
    <scope>NUCLEOTIDE SEQUENCE [MRNA]</scope>
    <source>
        <strain>NOD</strain>
        <tissue>Spleen</tissue>
    </source>
</reference>
<reference key="2">
    <citation type="journal article" date="2006" name="Immunity">
        <title>Dendritic cells regulate exposure of MHC class II at their plasma membrane by oligoubiquitination.</title>
        <authorList>
            <person name="van Niel G."/>
            <person name="Wubbolts R."/>
            <person name="Ten Broeke T."/>
            <person name="Buschow S.I."/>
            <person name="Ossendorp F.A."/>
            <person name="Melief C.J."/>
            <person name="Raposo G."/>
            <person name="van Balkom B.W."/>
            <person name="Stoorvogel W."/>
        </authorList>
    </citation>
    <scope>UBIQUITINATION</scope>
</reference>
<reference key="3">
    <citation type="journal article" date="2006" name="Nature">
        <title>Surface expression of MHC class II in dendritic cells is controlled by regulated ubiquitination.</title>
        <authorList>
            <person name="Shin J.S."/>
            <person name="Ebersold M."/>
            <person name="Pypaert M."/>
            <person name="Delamarre L."/>
            <person name="Hartley A."/>
            <person name="Mellman I."/>
        </authorList>
    </citation>
    <scope>UBIQUITINATION</scope>
</reference>
<reference key="4">
    <citation type="journal article" date="2003" name="Mol. Cell">
        <title>Evidence that structural rearrangements and/or flexibility during TCR binding can contribute to T cell activation.</title>
        <authorList>
            <person name="Krogsgaard M."/>
            <person name="Prado N."/>
            <person name="Adams E.J."/>
            <person name="He X.L."/>
            <person name="Chow D.C."/>
            <person name="Wilson D.B."/>
            <person name="Garcia K.C."/>
            <person name="Davis M.M."/>
        </authorList>
    </citation>
    <scope>X-RAY CRYSTALLOGRAPHY (2.5 ANGSTROMS) OF 32-215</scope>
    <scope>DISULFIDE BONDS</scope>
</reference>
<evidence type="ECO:0000255" key="1"/>
<evidence type="ECO:0000255" key="2">
    <source>
        <dbReference type="PROSITE-ProRule" id="PRU00114"/>
    </source>
</evidence>
<evidence type="ECO:0000269" key="3">
    <source>
    </source>
</evidence>
<evidence type="ECO:0000269" key="4">
    <source>
    </source>
</evidence>
<evidence type="ECO:0000269" key="5">
    <source>
    </source>
</evidence>
<evidence type="ECO:0000305" key="6"/>
<evidence type="ECO:0007829" key="7">
    <source>
        <dbReference type="PDB" id="1R5V"/>
    </source>
</evidence>
<dbReference type="EMBL" id="X52641">
    <property type="protein sequence ID" value="CAA36863.1"/>
    <property type="molecule type" value="mRNA"/>
</dbReference>
<dbReference type="PIR" id="I48224">
    <property type="entry name" value="S11650"/>
</dbReference>
<dbReference type="PDB" id="1R5V">
    <property type="method" value="X-ray"/>
    <property type="resolution" value="2.50 A"/>
    <property type="chains" value="B/D=32-215"/>
</dbReference>
<dbReference type="PDBsum" id="1R5V"/>
<dbReference type="SMR" id="P18468"/>
<dbReference type="GlyCosmos" id="P18468">
    <property type="glycosylation" value="1 site, No reported glycans"/>
</dbReference>
<dbReference type="iPTMnet" id="P18468"/>
<dbReference type="PhosphoSitePlus" id="P18468"/>
<dbReference type="ProteomicsDB" id="270945"/>
<dbReference type="AGR" id="MGI:95901"/>
<dbReference type="MGI" id="MGI:95901">
    <property type="gene designation" value="H2-Eb1"/>
</dbReference>
<dbReference type="OrthoDB" id="9940220at2759"/>
<dbReference type="ChiTaRS" id="H2-Eb1">
    <property type="organism name" value="mouse"/>
</dbReference>
<dbReference type="EvolutionaryTrace" id="P18468"/>
<dbReference type="Proteomes" id="UP000000589">
    <property type="component" value="Unplaced"/>
</dbReference>
<dbReference type="GO" id="GO:0031902">
    <property type="term" value="C:late endosome membrane"/>
    <property type="evidence" value="ECO:0000250"/>
    <property type="project" value="BHF-UCL"/>
</dbReference>
<dbReference type="GO" id="GO:0005765">
    <property type="term" value="C:lysosomal membrane"/>
    <property type="evidence" value="ECO:0000250"/>
    <property type="project" value="BHF-UCL"/>
</dbReference>
<dbReference type="GO" id="GO:0042613">
    <property type="term" value="C:MHC class II protein complex"/>
    <property type="evidence" value="ECO:0000304"/>
    <property type="project" value="BHF-UCL"/>
</dbReference>
<dbReference type="GO" id="GO:0002250">
    <property type="term" value="P:adaptive immune response"/>
    <property type="evidence" value="ECO:0007669"/>
    <property type="project" value="UniProtKB-KW"/>
</dbReference>
<dbReference type="GO" id="GO:0019886">
    <property type="term" value="P:antigen processing and presentation of exogenous peptide antigen via MHC class II"/>
    <property type="evidence" value="ECO:0000314"/>
    <property type="project" value="BHF-UCL"/>
</dbReference>
<dbReference type="GO" id="GO:0034341">
    <property type="term" value="P:response to type II interferon"/>
    <property type="evidence" value="ECO:0000314"/>
    <property type="project" value="BHF-UCL"/>
</dbReference>
<dbReference type="CDD" id="cd20998">
    <property type="entry name" value="IgC1_MHC_II_beta_I-E"/>
    <property type="match status" value="1"/>
</dbReference>
<dbReference type="FunFam" id="2.60.40.10:FF:000116">
    <property type="entry name" value="HLA class II histocompatibility antigen, DRB1-1 beta chain"/>
    <property type="match status" value="1"/>
</dbReference>
<dbReference type="FunFam" id="3.10.320.10:FF:000001">
    <property type="entry name" value="HLA class II histocompatibility antigen, DRB1-1 beta chain"/>
    <property type="match status" value="1"/>
</dbReference>
<dbReference type="Gene3D" id="3.10.320.10">
    <property type="entry name" value="Class II Histocompatibility Antigen, M Beta Chain, Chain B, domain 1"/>
    <property type="match status" value="1"/>
</dbReference>
<dbReference type="Gene3D" id="2.60.40.10">
    <property type="entry name" value="Immunoglobulins"/>
    <property type="match status" value="1"/>
</dbReference>
<dbReference type="InterPro" id="IPR007110">
    <property type="entry name" value="Ig-like_dom"/>
</dbReference>
<dbReference type="InterPro" id="IPR036179">
    <property type="entry name" value="Ig-like_dom_sf"/>
</dbReference>
<dbReference type="InterPro" id="IPR013783">
    <property type="entry name" value="Ig-like_fold"/>
</dbReference>
<dbReference type="InterPro" id="IPR003006">
    <property type="entry name" value="Ig/MHC_CS"/>
</dbReference>
<dbReference type="InterPro" id="IPR003597">
    <property type="entry name" value="Ig_C1-set"/>
</dbReference>
<dbReference type="InterPro" id="IPR050160">
    <property type="entry name" value="MHC/Immunoglobulin"/>
</dbReference>
<dbReference type="InterPro" id="IPR011162">
    <property type="entry name" value="MHC_I/II-like_Ag-recog"/>
</dbReference>
<dbReference type="InterPro" id="IPR014745">
    <property type="entry name" value="MHC_II_a/b_N"/>
</dbReference>
<dbReference type="InterPro" id="IPR000353">
    <property type="entry name" value="MHC_II_b_N"/>
</dbReference>
<dbReference type="PANTHER" id="PTHR19944:SF99">
    <property type="entry name" value="HLA CLASS II HISTOCOMPATIBILITY ANTIGEN, DRB1 BETA CHAIN"/>
    <property type="match status" value="1"/>
</dbReference>
<dbReference type="PANTHER" id="PTHR19944">
    <property type="entry name" value="MHC CLASS II-RELATED"/>
    <property type="match status" value="1"/>
</dbReference>
<dbReference type="Pfam" id="PF07654">
    <property type="entry name" value="C1-set"/>
    <property type="match status" value="1"/>
</dbReference>
<dbReference type="Pfam" id="PF00969">
    <property type="entry name" value="MHC_II_beta"/>
    <property type="match status" value="1"/>
</dbReference>
<dbReference type="SMART" id="SM00407">
    <property type="entry name" value="IGc1"/>
    <property type="match status" value="1"/>
</dbReference>
<dbReference type="SMART" id="SM00921">
    <property type="entry name" value="MHC_II_beta"/>
    <property type="match status" value="1"/>
</dbReference>
<dbReference type="SUPFAM" id="SSF48726">
    <property type="entry name" value="Immunoglobulin"/>
    <property type="match status" value="1"/>
</dbReference>
<dbReference type="SUPFAM" id="SSF54452">
    <property type="entry name" value="MHC antigen-recognition domain"/>
    <property type="match status" value="1"/>
</dbReference>
<dbReference type="PROSITE" id="PS50835">
    <property type="entry name" value="IG_LIKE"/>
    <property type="match status" value="1"/>
</dbReference>
<dbReference type="PROSITE" id="PS00290">
    <property type="entry name" value="IG_MHC"/>
    <property type="match status" value="1"/>
</dbReference>
<proteinExistence type="evidence at protein level"/>
<name>HB2I_MOUSE</name>
<organism>
    <name type="scientific">Mus musculus</name>
    <name type="common">Mouse</name>
    <dbReference type="NCBI Taxonomy" id="10090"/>
    <lineage>
        <taxon>Eukaryota</taxon>
        <taxon>Metazoa</taxon>
        <taxon>Chordata</taxon>
        <taxon>Craniata</taxon>
        <taxon>Vertebrata</taxon>
        <taxon>Euteleostomi</taxon>
        <taxon>Mammalia</taxon>
        <taxon>Eutheria</taxon>
        <taxon>Euarchontoglires</taxon>
        <taxon>Glires</taxon>
        <taxon>Rodentia</taxon>
        <taxon>Myomorpha</taxon>
        <taxon>Muroidea</taxon>
        <taxon>Muridae</taxon>
        <taxon>Murinae</taxon>
        <taxon>Mus</taxon>
        <taxon>Mus</taxon>
    </lineage>
</organism>
<keyword id="KW-0002">3D-structure</keyword>
<keyword id="KW-1064">Adaptive immunity</keyword>
<keyword id="KW-1015">Disulfide bond</keyword>
<keyword id="KW-0325">Glycoprotein</keyword>
<keyword id="KW-0391">Immunity</keyword>
<keyword id="KW-0472">Membrane</keyword>
<keyword id="KW-0491">MHC II</keyword>
<keyword id="KW-1185">Reference proteome</keyword>
<keyword id="KW-0732">Signal</keyword>
<keyword id="KW-0812">Transmembrane</keyword>
<keyword id="KW-1133">Transmembrane helix</keyword>
<keyword id="KW-0832">Ubl conjugation</keyword>
<feature type="signal peptide">
    <location>
        <begin position="1"/>
        <end position="31"/>
    </location>
</feature>
<feature type="chain" id="PRO_0000019003" description="H-2 class II histocompatibility antigen, I-A beta chain">
    <location>
        <begin position="32"/>
        <end position="264"/>
    </location>
</feature>
<feature type="topological domain" description="Extracellular" evidence="1">
    <location>
        <begin position="32"/>
        <end position="225"/>
    </location>
</feature>
<feature type="transmembrane region" description="Helical" evidence="1">
    <location>
        <begin position="226"/>
        <end position="248"/>
    </location>
</feature>
<feature type="topological domain" description="Cytoplasmic" evidence="1">
    <location>
        <begin position="249"/>
        <end position="264"/>
    </location>
</feature>
<feature type="domain" description="Ig-like C1-type">
    <location>
        <begin position="124"/>
        <end position="214"/>
    </location>
</feature>
<feature type="region of interest" description="Beta-1">
    <location>
        <begin position="32"/>
        <end position="121"/>
    </location>
</feature>
<feature type="region of interest" description="Beta-2">
    <location>
        <begin position="122"/>
        <end position="215"/>
    </location>
</feature>
<feature type="region of interest" description="Connecting peptide">
    <location>
        <begin position="216"/>
        <end position="225"/>
    </location>
</feature>
<feature type="glycosylation site" description="N-linked (GlcNAc...) asparagine" evidence="1">
    <location>
        <position position="46"/>
    </location>
</feature>
<feature type="disulfide bond" evidence="2 3">
    <location>
        <begin position="42"/>
        <end position="106"/>
    </location>
</feature>
<feature type="disulfide bond" evidence="2 3">
    <location>
        <begin position="144"/>
        <end position="200"/>
    </location>
</feature>
<feature type="strand" evidence="7">
    <location>
        <begin position="34"/>
        <end position="45"/>
    </location>
</feature>
<feature type="helix" evidence="7">
    <location>
        <begin position="47"/>
        <end position="49"/>
    </location>
</feature>
<feature type="strand" evidence="7">
    <location>
        <begin position="50"/>
        <end position="59"/>
    </location>
</feature>
<feature type="strand" evidence="7">
    <location>
        <begin position="62"/>
        <end position="68"/>
    </location>
</feature>
<feature type="turn" evidence="7">
    <location>
        <begin position="69"/>
        <end position="71"/>
    </location>
</feature>
<feature type="strand" evidence="7">
    <location>
        <begin position="73"/>
        <end position="78"/>
    </location>
</feature>
<feature type="helix" evidence="7">
    <location>
        <begin position="79"/>
        <end position="81"/>
    </location>
</feature>
<feature type="helix" evidence="7">
    <location>
        <begin position="82"/>
        <end position="89"/>
    </location>
</feature>
<feature type="helix" evidence="7">
    <location>
        <begin position="92"/>
        <end position="104"/>
    </location>
</feature>
<feature type="helix" evidence="7">
    <location>
        <begin position="106"/>
        <end position="113"/>
    </location>
</feature>
<feature type="turn" evidence="7">
    <location>
        <begin position="114"/>
        <end position="116"/>
    </location>
</feature>
<feature type="strand" evidence="7">
    <location>
        <begin position="125"/>
        <end position="131"/>
    </location>
</feature>
<feature type="strand" evidence="7">
    <location>
        <begin position="133"/>
        <end position="135"/>
    </location>
</feature>
<feature type="strand" evidence="7">
    <location>
        <begin position="141"/>
        <end position="152"/>
    </location>
</feature>
<feature type="strand" evidence="7">
    <location>
        <begin position="155"/>
        <end position="160"/>
    </location>
</feature>
<feature type="strand" evidence="7">
    <location>
        <begin position="167"/>
        <end position="171"/>
    </location>
</feature>
<feature type="strand" evidence="7">
    <location>
        <begin position="178"/>
        <end position="180"/>
    </location>
</feature>
<feature type="strand" evidence="7">
    <location>
        <begin position="182"/>
        <end position="189"/>
    </location>
</feature>
<feature type="strand" evidence="7">
    <location>
        <begin position="198"/>
        <end position="203"/>
    </location>
</feature>
<feature type="strand" evidence="7">
    <location>
        <begin position="211"/>
        <end position="215"/>
    </location>
</feature>
<sequence>MVWLPRVPCVAAVILLLTVLSPPVALVRDSRPWFLEYCKSECHFYNGTQRVRFLKRYFYNLEENLRFDSDVGEFRAVTELGRPDAENWNSQPEILDEKRAAVDTYCRHNYEIFDNFLVPRRVEPTVTVYPTKTQPLEHHNLLVCSVSDFYPGNIEVRWFRNGKEEKTGIVSTGLVRNGDWTFQTLVMLETVPQSGEVYTCQVEHPSLTDPVTVEWKAQSTSAQNKMLSGVGGFVLGLLFLRAGLFIYFRNQKGQSGLQPTGLLS</sequence>